<proteinExistence type="inferred from homology"/>
<name>RL22_METCA</name>
<evidence type="ECO:0000255" key="1">
    <source>
        <dbReference type="HAMAP-Rule" id="MF_01331"/>
    </source>
</evidence>
<evidence type="ECO:0000305" key="2"/>
<feature type="chain" id="PRO_0000243168" description="Large ribosomal subunit protein uL22">
    <location>
        <begin position="1"/>
        <end position="110"/>
    </location>
</feature>
<sequence length="110" mass="12051">MEALSRHRTARISPQKCRLVADQIRGLNVAAALDLLTFSNKKAAGLVKKVLQAAIANAEHNEGADVDELRVKTVFVDEGPVLKRMSPRAKGRANRILKRTSHITVLVSDN</sequence>
<reference key="1">
    <citation type="journal article" date="2004" name="PLoS Biol.">
        <title>Genomic insights into methanotrophy: the complete genome sequence of Methylococcus capsulatus (Bath).</title>
        <authorList>
            <person name="Ward N.L."/>
            <person name="Larsen O."/>
            <person name="Sakwa J."/>
            <person name="Bruseth L."/>
            <person name="Khouri H.M."/>
            <person name="Durkin A.S."/>
            <person name="Dimitrov G."/>
            <person name="Jiang L."/>
            <person name="Scanlan D."/>
            <person name="Kang K.H."/>
            <person name="Lewis M.R."/>
            <person name="Nelson K.E."/>
            <person name="Methe B.A."/>
            <person name="Wu M."/>
            <person name="Heidelberg J.F."/>
            <person name="Paulsen I.T."/>
            <person name="Fouts D.E."/>
            <person name="Ravel J."/>
            <person name="Tettelin H."/>
            <person name="Ren Q."/>
            <person name="Read T.D."/>
            <person name="DeBoy R.T."/>
            <person name="Seshadri R."/>
            <person name="Salzberg S.L."/>
            <person name="Jensen H.B."/>
            <person name="Birkeland N.K."/>
            <person name="Nelson W.C."/>
            <person name="Dodson R.J."/>
            <person name="Grindhaug S.H."/>
            <person name="Holt I.E."/>
            <person name="Eidhammer I."/>
            <person name="Jonasen I."/>
            <person name="Vanaken S."/>
            <person name="Utterback T.R."/>
            <person name="Feldblyum T.V."/>
            <person name="Fraser C.M."/>
            <person name="Lillehaug J.R."/>
            <person name="Eisen J.A."/>
        </authorList>
    </citation>
    <scope>NUCLEOTIDE SEQUENCE [LARGE SCALE GENOMIC DNA]</scope>
    <source>
        <strain>ATCC 33009 / NCIMB 11132 / Bath</strain>
    </source>
</reference>
<keyword id="KW-1185">Reference proteome</keyword>
<keyword id="KW-0687">Ribonucleoprotein</keyword>
<keyword id="KW-0689">Ribosomal protein</keyword>
<keyword id="KW-0694">RNA-binding</keyword>
<keyword id="KW-0699">rRNA-binding</keyword>
<dbReference type="EMBL" id="AE017282">
    <property type="protein sequence ID" value="AAU91461.1"/>
    <property type="molecule type" value="Genomic_DNA"/>
</dbReference>
<dbReference type="RefSeq" id="WP_010961595.1">
    <property type="nucleotide sequence ID" value="NC_002977.6"/>
</dbReference>
<dbReference type="SMR" id="Q605B7"/>
<dbReference type="STRING" id="243233.MCA2367"/>
<dbReference type="GeneID" id="88224569"/>
<dbReference type="KEGG" id="mca:MCA2367"/>
<dbReference type="eggNOG" id="COG0091">
    <property type="taxonomic scope" value="Bacteria"/>
</dbReference>
<dbReference type="HOGENOM" id="CLU_083987_3_3_6"/>
<dbReference type="Proteomes" id="UP000006821">
    <property type="component" value="Chromosome"/>
</dbReference>
<dbReference type="GO" id="GO:0022625">
    <property type="term" value="C:cytosolic large ribosomal subunit"/>
    <property type="evidence" value="ECO:0007669"/>
    <property type="project" value="TreeGrafter"/>
</dbReference>
<dbReference type="GO" id="GO:0019843">
    <property type="term" value="F:rRNA binding"/>
    <property type="evidence" value="ECO:0007669"/>
    <property type="project" value="UniProtKB-UniRule"/>
</dbReference>
<dbReference type="GO" id="GO:0003735">
    <property type="term" value="F:structural constituent of ribosome"/>
    <property type="evidence" value="ECO:0007669"/>
    <property type="project" value="InterPro"/>
</dbReference>
<dbReference type="GO" id="GO:0006412">
    <property type="term" value="P:translation"/>
    <property type="evidence" value="ECO:0007669"/>
    <property type="project" value="UniProtKB-UniRule"/>
</dbReference>
<dbReference type="CDD" id="cd00336">
    <property type="entry name" value="Ribosomal_L22"/>
    <property type="match status" value="1"/>
</dbReference>
<dbReference type="FunFam" id="3.90.470.10:FF:000001">
    <property type="entry name" value="50S ribosomal protein L22"/>
    <property type="match status" value="1"/>
</dbReference>
<dbReference type="Gene3D" id="3.90.470.10">
    <property type="entry name" value="Ribosomal protein L22/L17"/>
    <property type="match status" value="1"/>
</dbReference>
<dbReference type="HAMAP" id="MF_01331_B">
    <property type="entry name" value="Ribosomal_uL22_B"/>
    <property type="match status" value="1"/>
</dbReference>
<dbReference type="InterPro" id="IPR001063">
    <property type="entry name" value="Ribosomal_uL22"/>
</dbReference>
<dbReference type="InterPro" id="IPR005727">
    <property type="entry name" value="Ribosomal_uL22_bac/chlpt-type"/>
</dbReference>
<dbReference type="InterPro" id="IPR047867">
    <property type="entry name" value="Ribosomal_uL22_bac/org-type"/>
</dbReference>
<dbReference type="InterPro" id="IPR018260">
    <property type="entry name" value="Ribosomal_uL22_CS"/>
</dbReference>
<dbReference type="InterPro" id="IPR036394">
    <property type="entry name" value="Ribosomal_uL22_sf"/>
</dbReference>
<dbReference type="NCBIfam" id="TIGR01044">
    <property type="entry name" value="rplV_bact"/>
    <property type="match status" value="1"/>
</dbReference>
<dbReference type="PANTHER" id="PTHR13501">
    <property type="entry name" value="CHLOROPLAST 50S RIBOSOMAL PROTEIN L22-RELATED"/>
    <property type="match status" value="1"/>
</dbReference>
<dbReference type="PANTHER" id="PTHR13501:SF8">
    <property type="entry name" value="LARGE RIBOSOMAL SUBUNIT PROTEIN UL22M"/>
    <property type="match status" value="1"/>
</dbReference>
<dbReference type="Pfam" id="PF00237">
    <property type="entry name" value="Ribosomal_L22"/>
    <property type="match status" value="1"/>
</dbReference>
<dbReference type="SUPFAM" id="SSF54843">
    <property type="entry name" value="Ribosomal protein L22"/>
    <property type="match status" value="1"/>
</dbReference>
<dbReference type="PROSITE" id="PS00464">
    <property type="entry name" value="RIBOSOMAL_L22"/>
    <property type="match status" value="1"/>
</dbReference>
<organism>
    <name type="scientific">Methylococcus capsulatus (strain ATCC 33009 / NCIMB 11132 / Bath)</name>
    <dbReference type="NCBI Taxonomy" id="243233"/>
    <lineage>
        <taxon>Bacteria</taxon>
        <taxon>Pseudomonadati</taxon>
        <taxon>Pseudomonadota</taxon>
        <taxon>Gammaproteobacteria</taxon>
        <taxon>Methylococcales</taxon>
        <taxon>Methylococcaceae</taxon>
        <taxon>Methylococcus</taxon>
    </lineage>
</organism>
<comment type="function">
    <text evidence="1">This protein binds specifically to 23S rRNA; its binding is stimulated by other ribosomal proteins, e.g. L4, L17, and L20. It is important during the early stages of 50S assembly. It makes multiple contacts with different domains of the 23S rRNA in the assembled 50S subunit and ribosome (By similarity).</text>
</comment>
<comment type="function">
    <text evidence="1">The globular domain of the protein is located near the polypeptide exit tunnel on the outside of the subunit, while an extended beta-hairpin is found that lines the wall of the exit tunnel in the center of the 70S ribosome.</text>
</comment>
<comment type="subunit">
    <text evidence="1">Part of the 50S ribosomal subunit.</text>
</comment>
<comment type="similarity">
    <text evidence="1">Belongs to the universal ribosomal protein uL22 family.</text>
</comment>
<protein>
    <recommendedName>
        <fullName evidence="1">Large ribosomal subunit protein uL22</fullName>
    </recommendedName>
    <alternativeName>
        <fullName evidence="2">50S ribosomal protein L22</fullName>
    </alternativeName>
</protein>
<gene>
    <name evidence="1" type="primary">rplV</name>
    <name type="ordered locus">MCA2367</name>
</gene>
<accession>Q605B7</accession>